<protein>
    <recommendedName>
        <fullName evidence="6">Aquaporin PIP1-2</fullName>
    </recommendedName>
    <alternativeName>
        <fullName evidence="6">Plasma membrane intrinsic protein 1-2</fullName>
        <shortName evidence="6">MusaPIP1-2</shortName>
        <shortName evidence="6">MusaPIP1;2</shortName>
    </alternativeName>
</protein>
<proteinExistence type="evidence at transcript level"/>
<evidence type="ECO:0000250" key="1">
    <source>
        <dbReference type="UniProtKB" id="P0DO53"/>
    </source>
</evidence>
<evidence type="ECO:0000250" key="2">
    <source>
        <dbReference type="UniProtKB" id="P30302"/>
    </source>
</evidence>
<evidence type="ECO:0000255" key="3"/>
<evidence type="ECO:0000256" key="4">
    <source>
        <dbReference type="SAM" id="MobiDB-lite"/>
    </source>
</evidence>
<evidence type="ECO:0000269" key="5">
    <source>
    </source>
</evidence>
<evidence type="ECO:0000303" key="6">
    <source>
    </source>
</evidence>
<evidence type="ECO:0000305" key="7"/>
<evidence type="ECO:0000312" key="8">
    <source>
        <dbReference type="EMBL" id="CAG1852872.1"/>
    </source>
</evidence>
<reference key="1">
    <citation type="submission" date="2021-03" db="EMBL/GenBank/DDBJ databases">
        <authorList>
            <consortium name="Genoscope - CEA"/>
            <person name="William W."/>
        </authorList>
    </citation>
    <scope>NUCLEOTIDE SEQUENCE [LARGE SCALE GENOMIC DNA]</scope>
    <source>
        <strain>cv. Doubled-haploid Pahang</strain>
    </source>
</reference>
<reference key="2">
    <citation type="journal article" date="2015" name="Int. J. Mol. Sci.">
        <title>Genome-wide identification and expression analyses of aquaporin gene family during development and abiotic stress in banana.</title>
        <authorList>
            <person name="Hu W."/>
            <person name="Hou X."/>
            <person name="Huang C."/>
            <person name="Yan Y."/>
            <person name="Tie W."/>
            <person name="Ding Z."/>
            <person name="Wei Y."/>
            <person name="Liu J."/>
            <person name="Miao H."/>
            <person name="Lu Z."/>
            <person name="Li M."/>
            <person name="Xu B."/>
            <person name="Jin Z."/>
        </authorList>
    </citation>
    <scope>TISSUE SPECIFICITY</scope>
    <scope>GENE FAMILY</scope>
    <scope>NOMENCLATURE</scope>
</reference>
<accession>A0A804KTT0</accession>
<sequence>MEGKEEDVRLGANKFTERQPIGTAAQSQDKDYKEPPPAPLFEPGELSSWSFYRAGIAEFVATFLFLYITILTVMGVVKSSTKCSTVGIQGIAWAFGGMIFALVYCTAGISGGHINPAVTFGLFLARKLSLTRALFYMVMQCLGAICGAGVVKGFQKGLYENNGGGANVVAPGYTKGDGLGAEIVGTFILVYTVFSATDAKRSARDSHVPILAPLPIGFAVFLVHLATIPITGTGINPARSLGAAIIYNKGHAWDDHWIFWVGPFIGAALAALYHQVVIRAIPFKSRS</sequence>
<organism>
    <name type="scientific">Musa acuminata subsp. malaccensis</name>
    <name type="common">Wild banana</name>
    <name type="synonym">Musa malaccensis</name>
    <dbReference type="NCBI Taxonomy" id="214687"/>
    <lineage>
        <taxon>Eukaryota</taxon>
        <taxon>Viridiplantae</taxon>
        <taxon>Streptophyta</taxon>
        <taxon>Embryophyta</taxon>
        <taxon>Tracheophyta</taxon>
        <taxon>Spermatophyta</taxon>
        <taxon>Magnoliopsida</taxon>
        <taxon>Liliopsida</taxon>
        <taxon>Zingiberales</taxon>
        <taxon>Musaceae</taxon>
        <taxon>Musa</taxon>
    </lineage>
</organism>
<gene>
    <name evidence="6" type="primary">PIP1-2</name>
    <name evidence="8" type="ordered locus">Ma10_g07860</name>
    <name evidence="8" type="ORF">GSMUA_310980.1</name>
</gene>
<dbReference type="EMBL" id="HG996476">
    <property type="protein sequence ID" value="CAG1852872.1"/>
    <property type="molecule type" value="Genomic_DNA"/>
</dbReference>
<dbReference type="SMR" id="A0A804KTT0"/>
<dbReference type="FunCoup" id="A0A804KTT0">
    <property type="interactions" value="442"/>
</dbReference>
<dbReference type="EnsemblPlants" id="Ma10_t07860.1">
    <property type="protein sequence ID" value="Ma10_p07860.1"/>
    <property type="gene ID" value="Ma10_g07860"/>
</dbReference>
<dbReference type="GeneID" id="104000197"/>
<dbReference type="Gramene" id="Ma10_t07860.1">
    <property type="protein sequence ID" value="Ma10_p07860.1"/>
    <property type="gene ID" value="Ma10_g07860"/>
</dbReference>
<dbReference type="KEGG" id="mus:104000197"/>
<dbReference type="InParanoid" id="A0A804KTT0"/>
<dbReference type="OMA" id="VEIMFTF"/>
<dbReference type="OrthoDB" id="3222at2759"/>
<dbReference type="Proteomes" id="UP000012960">
    <property type="component" value="Unplaced"/>
</dbReference>
<dbReference type="GO" id="GO:0005886">
    <property type="term" value="C:plasma membrane"/>
    <property type="evidence" value="ECO:0000318"/>
    <property type="project" value="GO_Central"/>
</dbReference>
<dbReference type="GO" id="GO:0015250">
    <property type="term" value="F:water channel activity"/>
    <property type="evidence" value="ECO:0000318"/>
    <property type="project" value="GO_Central"/>
</dbReference>
<dbReference type="GO" id="GO:0009414">
    <property type="term" value="P:response to water deprivation"/>
    <property type="evidence" value="ECO:0000318"/>
    <property type="project" value="GO_Central"/>
</dbReference>
<dbReference type="CDD" id="cd00333">
    <property type="entry name" value="MIP"/>
    <property type="match status" value="1"/>
</dbReference>
<dbReference type="FunFam" id="1.20.1080.10:FF:000001">
    <property type="entry name" value="Probable aquaporin PIP1-2"/>
    <property type="match status" value="1"/>
</dbReference>
<dbReference type="Gene3D" id="1.20.1080.10">
    <property type="entry name" value="Glycerol uptake facilitator protein"/>
    <property type="match status" value="1"/>
</dbReference>
<dbReference type="InterPro" id="IPR023271">
    <property type="entry name" value="Aquaporin-like"/>
</dbReference>
<dbReference type="InterPro" id="IPR034294">
    <property type="entry name" value="Aquaporin_transptr"/>
</dbReference>
<dbReference type="InterPro" id="IPR000425">
    <property type="entry name" value="MIP"/>
</dbReference>
<dbReference type="InterPro" id="IPR022357">
    <property type="entry name" value="MIP_CS"/>
</dbReference>
<dbReference type="NCBIfam" id="TIGR00861">
    <property type="entry name" value="MIP"/>
    <property type="match status" value="1"/>
</dbReference>
<dbReference type="PANTHER" id="PTHR45687">
    <property type="entry name" value="AQUAPORIN OR AQUAGLYCEROPORIN RELATED"/>
    <property type="match status" value="1"/>
</dbReference>
<dbReference type="Pfam" id="PF00230">
    <property type="entry name" value="MIP"/>
    <property type="match status" value="1"/>
</dbReference>
<dbReference type="PRINTS" id="PR00783">
    <property type="entry name" value="MINTRINSICP"/>
</dbReference>
<dbReference type="SUPFAM" id="SSF81338">
    <property type="entry name" value="Aquaporin-like"/>
    <property type="match status" value="1"/>
</dbReference>
<dbReference type="PROSITE" id="PS00221">
    <property type="entry name" value="MIP"/>
    <property type="match status" value="1"/>
</dbReference>
<keyword id="KW-1003">Cell membrane</keyword>
<keyword id="KW-0472">Membrane</keyword>
<keyword id="KW-1185">Reference proteome</keyword>
<keyword id="KW-0346">Stress response</keyword>
<keyword id="KW-0812">Transmembrane</keyword>
<keyword id="KW-1133">Transmembrane helix</keyword>
<keyword id="KW-0813">Transport</keyword>
<name>PIP12_MUSAM</name>
<feature type="chain" id="PRO_0000455808" description="Aquaporin PIP1-2">
    <location>
        <begin position="1"/>
        <end position="287"/>
    </location>
</feature>
<feature type="topological domain" description="Cytoplasmic" evidence="7">
    <location>
        <begin position="1"/>
        <end position="55"/>
    </location>
</feature>
<feature type="transmembrane region" description="Helical; Name=1" evidence="3">
    <location>
        <begin position="56"/>
        <end position="76"/>
    </location>
</feature>
<feature type="topological domain" description="Extracellular" evidence="7">
    <location>
        <begin position="77"/>
        <end position="89"/>
    </location>
</feature>
<feature type="transmembrane region" description="Helical; Name=2" evidence="3">
    <location>
        <begin position="90"/>
        <end position="110"/>
    </location>
</feature>
<feature type="topological domain" description="Cytoplasmic" evidence="7">
    <location>
        <begin position="111"/>
        <end position="133"/>
    </location>
</feature>
<feature type="transmembrane region" description="Helical; Name=3" evidence="3">
    <location>
        <begin position="134"/>
        <end position="154"/>
    </location>
</feature>
<feature type="topological domain" description="Extracellular" evidence="7">
    <location>
        <begin position="155"/>
        <end position="175"/>
    </location>
</feature>
<feature type="transmembrane region" description="Helical; Name=4" evidence="3">
    <location>
        <begin position="176"/>
        <end position="196"/>
    </location>
</feature>
<feature type="topological domain" description="Cytoplasmic" evidence="7">
    <location>
        <begin position="197"/>
        <end position="209"/>
    </location>
</feature>
<feature type="transmembrane region" description="Helical; Name=5" evidence="3">
    <location>
        <begin position="210"/>
        <end position="230"/>
    </location>
</feature>
<feature type="topological domain" description="Extracellular" evidence="7">
    <location>
        <begin position="231"/>
        <end position="257"/>
    </location>
</feature>
<feature type="transmembrane region" description="Helical; Name=6" evidence="3">
    <location>
        <begin position="258"/>
        <end position="278"/>
    </location>
</feature>
<feature type="topological domain" description="Cytoplasmic" evidence="7">
    <location>
        <begin position="279"/>
        <end position="287"/>
    </location>
</feature>
<feature type="region of interest" description="Disordered" evidence="4">
    <location>
        <begin position="1"/>
        <end position="37"/>
    </location>
</feature>
<feature type="short sequence motif" description="NPA 1" evidence="3">
    <location>
        <begin position="115"/>
        <end position="117"/>
    </location>
</feature>
<feature type="short sequence motif" description="NPA 2" evidence="3">
    <location>
        <begin position="236"/>
        <end position="238"/>
    </location>
</feature>
<comment type="function">
    <text evidence="1 2">Water channel required to facilitate the transport of water across cell membrane; mercury-insensitive (By similarity). Contributes to the tolerance to multiple abiotic stresses including salt (NaCl), cold and water deprivation, by modulating cytosolic K(+)/Na(+) ratio, maintaining osmotic balance, and reducing membrane injury (e.g. oxidative injury) (By similarity).</text>
</comment>
<comment type="subcellular location">
    <subcellularLocation>
        <location evidence="1">Cell membrane</location>
        <topology evidence="3">Multi-pass membrane protein</topology>
    </subcellularLocation>
</comment>
<comment type="tissue specificity">
    <text evidence="5">Barely detectable in roots, leaves and fruits.</text>
</comment>
<comment type="domain">
    <text evidence="7">Aquaporins contain two tandem repeats each containing three membrane-spanning domains and a pore-forming loop with the signature motif Asn-Pro-Ala (NPA).</text>
</comment>
<comment type="biotechnology">
    <text evidence="1">Can be used to improve resistance to abiotic stresses such as cold, drought and salt.</text>
</comment>
<comment type="similarity">
    <text evidence="7">Belongs to the MIP/aquaporin (TC 1.A.8) family. PIP (TC 1.A.8.11) subfamily.</text>
</comment>